<comment type="function">
    <text evidence="1">Serine/threonine-protein kinase that acts as a negative regulator of MAP3K1/2 signaling. Converts MAP3K2 from its phosphorylated form to its non-phosphorylated form and inhibits autophosphorylation of MAP3K2. Acts as an ufmylation 'reader' in a kinase-independent manner: specifically recognizes and binds mono-ufmylated histone H4 in response to DNA damage, promoting the recruitment of SUV39H1 to the double-strand breaks, resulting in ATM activation.</text>
</comment>
<comment type="catalytic activity">
    <reaction evidence="1">
        <text>L-seryl-[protein] + ATP = O-phospho-L-seryl-[protein] + ADP + H(+)</text>
        <dbReference type="Rhea" id="RHEA:17989"/>
        <dbReference type="Rhea" id="RHEA-COMP:9863"/>
        <dbReference type="Rhea" id="RHEA-COMP:11604"/>
        <dbReference type="ChEBI" id="CHEBI:15378"/>
        <dbReference type="ChEBI" id="CHEBI:29999"/>
        <dbReference type="ChEBI" id="CHEBI:30616"/>
        <dbReference type="ChEBI" id="CHEBI:83421"/>
        <dbReference type="ChEBI" id="CHEBI:456216"/>
        <dbReference type="EC" id="2.7.11.1"/>
    </reaction>
</comment>
<comment type="catalytic activity">
    <reaction evidence="1">
        <text>L-threonyl-[protein] + ATP = O-phospho-L-threonyl-[protein] + ADP + H(+)</text>
        <dbReference type="Rhea" id="RHEA:46608"/>
        <dbReference type="Rhea" id="RHEA-COMP:11060"/>
        <dbReference type="Rhea" id="RHEA-COMP:11605"/>
        <dbReference type="ChEBI" id="CHEBI:15378"/>
        <dbReference type="ChEBI" id="CHEBI:30013"/>
        <dbReference type="ChEBI" id="CHEBI:30616"/>
        <dbReference type="ChEBI" id="CHEBI:61977"/>
        <dbReference type="ChEBI" id="CHEBI:456216"/>
        <dbReference type="EC" id="2.7.11.1"/>
    </reaction>
</comment>
<comment type="cofactor">
    <cofactor evidence="1">
        <name>Mg(2+)</name>
        <dbReference type="ChEBI" id="CHEBI:18420"/>
    </cofactor>
</comment>
<comment type="activity regulation">
    <text evidence="1">Activated by binding of S100B which releases autoinhibitory N-lobe interactions, enabling ATP to bind and the autophosphorylation of Ser-281. Thr-444 then undergoes calcium-dependent phosphorylation by STK24/MST3. Interactions between phosphorylated Thr-444 and the N-lobe promote additional structural changes that complete the activation of the kinase. Autoinhibition is also released by the binding of MOB1/MOBKL1A and MOB2/HCCA2 to the N-terminal of STK38 (By similarity).</text>
</comment>
<comment type="subunit">
    <text evidence="1 2">Homodimeric S100B binds two molecules of STK38. Interacts with MOB1 and MOB2. Interacts with MAP3K1 and MAP3K2 (via the kinase domain). Forms a tripartite complex with MOBKL1B and STK3/MST2. Interacts with MICAL1; leading to inhibit the protein kinase activity by antagonizing activation by MST1/STK4.</text>
</comment>
<comment type="subcellular location">
    <subcellularLocation>
        <location evidence="1">Nucleus</location>
    </subcellularLocation>
    <subcellularLocation>
        <location evidence="1">Cytoplasm</location>
    </subcellularLocation>
    <subcellularLocation>
        <location evidence="1">Chromosome</location>
    </subcellularLocation>
    <text evidence="1">Localizes to DNA double-strand breaks in response to DNA damage.</text>
</comment>
<comment type="domain">
    <text evidence="1">The UFM1-interacting motif (UFIM) specifically recognizes and binds ufmylated histone H4.</text>
</comment>
<comment type="PTM">
    <text evidence="1">ISGylated.</text>
</comment>
<comment type="PTM">
    <text evidence="1">Phosphorylated by STK3/MST2 and this is enhanced by MOBKL1B.</text>
</comment>
<comment type="similarity">
    <text evidence="6">Belongs to the protein kinase superfamily. AGC Ser/Thr protein kinase family.</text>
</comment>
<keyword id="KW-0007">Acetylation</keyword>
<keyword id="KW-0067">ATP-binding</keyword>
<keyword id="KW-0158">Chromosome</keyword>
<keyword id="KW-0963">Cytoplasm</keyword>
<keyword id="KW-0227">DNA damage</keyword>
<keyword id="KW-0418">Kinase</keyword>
<keyword id="KW-0460">Magnesium</keyword>
<keyword id="KW-0479">Metal-binding</keyword>
<keyword id="KW-0547">Nucleotide-binding</keyword>
<keyword id="KW-0539">Nucleus</keyword>
<keyword id="KW-0597">Phosphoprotein</keyword>
<keyword id="KW-1185">Reference proteome</keyword>
<keyword id="KW-0723">Serine/threonine-protein kinase</keyword>
<keyword id="KW-0808">Transferase</keyword>
<keyword id="KW-0832">Ubl conjugation</keyword>
<dbReference type="EC" id="2.7.11.1" evidence="1"/>
<dbReference type="EMBL" id="BC133417">
    <property type="protein sequence ID" value="AAI33418.1"/>
    <property type="molecule type" value="mRNA"/>
</dbReference>
<dbReference type="RefSeq" id="NP_001075071.1">
    <property type="nucleotide sequence ID" value="NM_001081602.1"/>
</dbReference>
<dbReference type="RefSeq" id="XP_024839415.1">
    <property type="nucleotide sequence ID" value="XM_024983647.2"/>
</dbReference>
<dbReference type="BMRB" id="A2VDV2"/>
<dbReference type="SMR" id="A2VDV2"/>
<dbReference type="FunCoup" id="A2VDV2">
    <property type="interactions" value="3809"/>
</dbReference>
<dbReference type="STRING" id="9913.ENSBTAP00000015663"/>
<dbReference type="PaxDb" id="9913-ENSBTAP00000015663"/>
<dbReference type="Ensembl" id="ENSBTAT00000015663.6">
    <property type="protein sequence ID" value="ENSBTAP00000015663.6"/>
    <property type="gene ID" value="ENSBTAG00000011126.7"/>
</dbReference>
<dbReference type="GeneID" id="533677"/>
<dbReference type="KEGG" id="bta:533677"/>
<dbReference type="CTD" id="11329"/>
<dbReference type="VEuPathDB" id="HostDB:ENSBTAG00000011126"/>
<dbReference type="VGNC" id="VGNC:35399">
    <property type="gene designation" value="STK38"/>
</dbReference>
<dbReference type="eggNOG" id="KOG0605">
    <property type="taxonomic scope" value="Eukaryota"/>
</dbReference>
<dbReference type="GeneTree" id="ENSGT00940000153544"/>
<dbReference type="InParanoid" id="A2VDV2"/>
<dbReference type="OMA" id="MLVHHAL"/>
<dbReference type="OrthoDB" id="3638488at2759"/>
<dbReference type="Reactome" id="R-BTA-9013418">
    <property type="pathway name" value="RHOBTB2 GTPase cycle"/>
</dbReference>
<dbReference type="Reactome" id="R-BTA-9013422">
    <property type="pathway name" value="RHOBTB1 GTPase cycle"/>
</dbReference>
<dbReference type="Proteomes" id="UP000009136">
    <property type="component" value="Chromosome 23"/>
</dbReference>
<dbReference type="Bgee" id="ENSBTAG00000011126">
    <property type="expression patterns" value="Expressed in blood and 105 other cell types or tissues"/>
</dbReference>
<dbReference type="GO" id="GO:0005737">
    <property type="term" value="C:cytoplasm"/>
    <property type="evidence" value="ECO:0000250"/>
    <property type="project" value="UniProtKB"/>
</dbReference>
<dbReference type="GO" id="GO:0005634">
    <property type="term" value="C:nucleus"/>
    <property type="evidence" value="ECO:0007669"/>
    <property type="project" value="UniProtKB-SubCell"/>
</dbReference>
<dbReference type="GO" id="GO:0035861">
    <property type="term" value="C:site of double-strand break"/>
    <property type="evidence" value="ECO:0000250"/>
    <property type="project" value="UniProtKB"/>
</dbReference>
<dbReference type="GO" id="GO:0005524">
    <property type="term" value="F:ATP binding"/>
    <property type="evidence" value="ECO:0007669"/>
    <property type="project" value="UniProtKB-KW"/>
</dbReference>
<dbReference type="GO" id="GO:0140566">
    <property type="term" value="F:histone reader activity"/>
    <property type="evidence" value="ECO:0000250"/>
    <property type="project" value="UniProtKB"/>
</dbReference>
<dbReference type="GO" id="GO:0046872">
    <property type="term" value="F:metal ion binding"/>
    <property type="evidence" value="ECO:0007669"/>
    <property type="project" value="UniProtKB-KW"/>
</dbReference>
<dbReference type="GO" id="GO:0106310">
    <property type="term" value="F:protein serine kinase activity"/>
    <property type="evidence" value="ECO:0007669"/>
    <property type="project" value="RHEA"/>
</dbReference>
<dbReference type="GO" id="GO:0004674">
    <property type="term" value="F:protein serine/threonine kinase activity"/>
    <property type="evidence" value="ECO:0000318"/>
    <property type="project" value="GO_Central"/>
</dbReference>
<dbReference type="GO" id="GO:0141185">
    <property type="term" value="F:UFM1-modified protein reader activity"/>
    <property type="evidence" value="ECO:0000250"/>
    <property type="project" value="UniProtKB"/>
</dbReference>
<dbReference type="GO" id="GO:0000077">
    <property type="term" value="P:DNA damage checkpoint signaling"/>
    <property type="evidence" value="ECO:0000250"/>
    <property type="project" value="UniProtKB"/>
</dbReference>
<dbReference type="GO" id="GO:0006974">
    <property type="term" value="P:DNA damage response"/>
    <property type="evidence" value="ECO:0000250"/>
    <property type="project" value="UniProtKB"/>
</dbReference>
<dbReference type="GO" id="GO:0035556">
    <property type="term" value="P:intracellular signal transduction"/>
    <property type="evidence" value="ECO:0000318"/>
    <property type="project" value="GO_Central"/>
</dbReference>
<dbReference type="GO" id="GO:0043407">
    <property type="term" value="P:negative regulation of MAP kinase activity"/>
    <property type="evidence" value="ECO:0000250"/>
    <property type="project" value="UniProtKB"/>
</dbReference>
<dbReference type="CDD" id="cd21782">
    <property type="entry name" value="MobB_NDR1"/>
    <property type="match status" value="1"/>
</dbReference>
<dbReference type="CDD" id="cd05628">
    <property type="entry name" value="STKc_NDR1"/>
    <property type="match status" value="1"/>
</dbReference>
<dbReference type="FunFam" id="1.10.510.10:FF:000057">
    <property type="entry name" value="Non-specific serine/threonine protein kinase"/>
    <property type="match status" value="1"/>
</dbReference>
<dbReference type="FunFam" id="1.10.510.10:FF:000086">
    <property type="entry name" value="Non-specific serine/threonine protein kinase"/>
    <property type="match status" value="1"/>
</dbReference>
<dbReference type="FunFam" id="3.30.200.20:FF:000118">
    <property type="entry name" value="Non-specific serine/threonine protein kinase"/>
    <property type="match status" value="1"/>
</dbReference>
<dbReference type="Gene3D" id="3.30.200.20">
    <property type="entry name" value="Phosphorylase Kinase, domain 1"/>
    <property type="match status" value="1"/>
</dbReference>
<dbReference type="Gene3D" id="1.10.510.10">
    <property type="entry name" value="Transferase(Phosphotransferase) domain 1"/>
    <property type="match status" value="1"/>
</dbReference>
<dbReference type="InterPro" id="IPR000961">
    <property type="entry name" value="AGC-kinase_C"/>
</dbReference>
<dbReference type="InterPro" id="IPR011009">
    <property type="entry name" value="Kinase-like_dom_sf"/>
</dbReference>
<dbReference type="InterPro" id="IPR017892">
    <property type="entry name" value="Pkinase_C"/>
</dbReference>
<dbReference type="InterPro" id="IPR000719">
    <property type="entry name" value="Prot_kinase_dom"/>
</dbReference>
<dbReference type="InterPro" id="IPR017441">
    <property type="entry name" value="Protein_kinase_ATP_BS"/>
</dbReference>
<dbReference type="InterPro" id="IPR050839">
    <property type="entry name" value="Rho-assoc_Ser/Thr_Kinase"/>
</dbReference>
<dbReference type="InterPro" id="IPR008271">
    <property type="entry name" value="Ser/Thr_kinase_AS"/>
</dbReference>
<dbReference type="PANTHER" id="PTHR22988:SF76">
    <property type="entry name" value="CHROMOSOME UNDETERMINED SCAFFOLD_135, WHOLE GENOME SHOTGUN SEQUENCE"/>
    <property type="match status" value="1"/>
</dbReference>
<dbReference type="PANTHER" id="PTHR22988">
    <property type="entry name" value="MYOTONIC DYSTROPHY S/T KINASE-RELATED"/>
    <property type="match status" value="1"/>
</dbReference>
<dbReference type="Pfam" id="PF00069">
    <property type="entry name" value="Pkinase"/>
    <property type="match status" value="1"/>
</dbReference>
<dbReference type="Pfam" id="PF00433">
    <property type="entry name" value="Pkinase_C"/>
    <property type="match status" value="1"/>
</dbReference>
<dbReference type="SMART" id="SM00220">
    <property type="entry name" value="S_TKc"/>
    <property type="match status" value="1"/>
</dbReference>
<dbReference type="SUPFAM" id="SSF56112">
    <property type="entry name" value="Protein kinase-like (PK-like)"/>
    <property type="match status" value="1"/>
</dbReference>
<dbReference type="PROSITE" id="PS51285">
    <property type="entry name" value="AGC_KINASE_CTER"/>
    <property type="match status" value="1"/>
</dbReference>
<dbReference type="PROSITE" id="PS00107">
    <property type="entry name" value="PROTEIN_KINASE_ATP"/>
    <property type="match status" value="1"/>
</dbReference>
<dbReference type="PROSITE" id="PS50011">
    <property type="entry name" value="PROTEIN_KINASE_DOM"/>
    <property type="match status" value="1"/>
</dbReference>
<dbReference type="PROSITE" id="PS00108">
    <property type="entry name" value="PROTEIN_KINASE_ST"/>
    <property type="match status" value="1"/>
</dbReference>
<organism>
    <name type="scientific">Bos taurus</name>
    <name type="common">Bovine</name>
    <dbReference type="NCBI Taxonomy" id="9913"/>
    <lineage>
        <taxon>Eukaryota</taxon>
        <taxon>Metazoa</taxon>
        <taxon>Chordata</taxon>
        <taxon>Craniata</taxon>
        <taxon>Vertebrata</taxon>
        <taxon>Euteleostomi</taxon>
        <taxon>Mammalia</taxon>
        <taxon>Eutheria</taxon>
        <taxon>Laurasiatheria</taxon>
        <taxon>Artiodactyla</taxon>
        <taxon>Ruminantia</taxon>
        <taxon>Pecora</taxon>
        <taxon>Bovidae</taxon>
        <taxon>Bovinae</taxon>
        <taxon>Bos</taxon>
    </lineage>
</organism>
<gene>
    <name type="primary">STK38</name>
</gene>
<reference key="1">
    <citation type="submission" date="2007-02" db="EMBL/GenBank/DDBJ databases">
        <authorList>
            <consortium name="NIH - Mammalian Gene Collection (MGC) project"/>
        </authorList>
    </citation>
    <scope>NUCLEOTIDE SEQUENCE [LARGE SCALE MRNA]</scope>
    <source>
        <strain>Hereford</strain>
        <tissue>Fetal skin</tissue>
    </source>
</reference>
<accession>A2VDV2</accession>
<sequence length="465" mass="54176">MAMTGSTPCSSMSSHTKERVTMTKVTLENFYSNLIAQHEEREMRQKKLEKVMEEEGLKDEEKRLRRSAHARKETEFLRLKRTRLGLEDFESLKVIGRGAFGEVRLVQKKDTGHVYAMKILRKADMLEKEQVGHIRAERDILVEADSLWVVKMFYSFQDKLNLYLIMEFLPGGDMMTLLMKKDTLTEEETQFYIAETVLAIDSIHQLGFIHRDIKPDNLLLDSKGHVKLSDFGLCTGLKKAHRTEFYRNLNHSLPSDFTFQNMNSKRKAETWKRNRRQLAFSTVGTPDYIAPEVFMQTGYNKLCDWWSLGVIMYEMLIGYPPFCSETPQETYKKVMNWKETLTFPPEVPISEKAKDLILRFCCEWEHRIGAPGVEEIKNNSFFEGVDWEHIRERPAAISIEIKSIDDTSNFDEFPESDILKPTVATSNHPDTDYKNKDWVFINYTYKRFEGLTARGAIPSYMKAAK</sequence>
<protein>
    <recommendedName>
        <fullName>Serine/threonine-protein kinase 38</fullName>
        <ecNumber evidence="1">2.7.11.1</ecNumber>
    </recommendedName>
</protein>
<name>STK38_BOVIN</name>
<evidence type="ECO:0000250" key="1">
    <source>
        <dbReference type="UniProtKB" id="Q15208"/>
    </source>
</evidence>
<evidence type="ECO:0000250" key="2">
    <source>
        <dbReference type="UniProtKB" id="Q91VJ4"/>
    </source>
</evidence>
<evidence type="ECO:0000255" key="3">
    <source>
        <dbReference type="PROSITE-ProRule" id="PRU00159"/>
    </source>
</evidence>
<evidence type="ECO:0000255" key="4">
    <source>
        <dbReference type="PROSITE-ProRule" id="PRU00618"/>
    </source>
</evidence>
<evidence type="ECO:0000255" key="5">
    <source>
        <dbReference type="PROSITE-ProRule" id="PRU10027"/>
    </source>
</evidence>
<evidence type="ECO:0000305" key="6"/>
<proteinExistence type="evidence at transcript level"/>
<feature type="initiator methionine" description="Removed" evidence="1">
    <location>
        <position position="1"/>
    </location>
</feature>
<feature type="chain" id="PRO_0000297526" description="Serine/threonine-protein kinase 38">
    <location>
        <begin position="2"/>
        <end position="465"/>
    </location>
</feature>
<feature type="domain" description="Protein kinase" evidence="3">
    <location>
        <begin position="89"/>
        <end position="382"/>
    </location>
</feature>
<feature type="domain" description="AGC-kinase C-terminal" evidence="4">
    <location>
        <begin position="383"/>
        <end position="455"/>
    </location>
</feature>
<feature type="region of interest" description="Interaction with S100B" evidence="1">
    <location>
        <begin position="62"/>
        <end position="87"/>
    </location>
</feature>
<feature type="short sequence motif" description="UFM1-interacting motif (UFIM)" evidence="1">
    <location>
        <begin position="306"/>
        <end position="311"/>
    </location>
</feature>
<feature type="active site" description="Proton acceptor" evidence="3 5">
    <location>
        <position position="212"/>
    </location>
</feature>
<feature type="binding site" evidence="3">
    <location>
        <begin position="95"/>
        <end position="103"/>
    </location>
    <ligand>
        <name>ATP</name>
        <dbReference type="ChEBI" id="CHEBI:30616"/>
    </ligand>
</feature>
<feature type="binding site" evidence="3">
    <location>
        <position position="118"/>
    </location>
    <ligand>
        <name>ATP</name>
        <dbReference type="ChEBI" id="CHEBI:30616"/>
    </ligand>
</feature>
<feature type="modified residue" description="N-acetylalanine" evidence="1">
    <location>
        <position position="2"/>
    </location>
</feature>
<feature type="modified residue" description="Phosphothreonine" evidence="1">
    <location>
        <position position="74"/>
    </location>
</feature>
<feature type="modified residue" description="Phosphoserine" evidence="1">
    <location>
        <position position="264"/>
    </location>
</feature>
<feature type="modified residue" description="Phosphoserine; by autocatalysis" evidence="1">
    <location>
        <position position="281"/>
    </location>
</feature>
<feature type="modified residue" description="Phosphothreonine; by STK24/MST3" evidence="1">
    <location>
        <position position="444"/>
    </location>
</feature>